<organism>
    <name type="scientific">Homo sapiens</name>
    <name type="common">Human</name>
    <dbReference type="NCBI Taxonomy" id="9606"/>
    <lineage>
        <taxon>Eukaryota</taxon>
        <taxon>Metazoa</taxon>
        <taxon>Chordata</taxon>
        <taxon>Craniata</taxon>
        <taxon>Vertebrata</taxon>
        <taxon>Euteleostomi</taxon>
        <taxon>Mammalia</taxon>
        <taxon>Eutheria</taxon>
        <taxon>Euarchontoglires</taxon>
        <taxon>Primates</taxon>
        <taxon>Haplorrhini</taxon>
        <taxon>Catarrhini</taxon>
        <taxon>Hominidae</taxon>
        <taxon>Homo</taxon>
    </lineage>
</organism>
<protein>
    <recommendedName>
        <fullName evidence="3">Transmembrane protein 242</fullName>
    </recommendedName>
</protein>
<name>TM242_HUMAN</name>
<keyword id="KW-0007">Acetylation</keyword>
<keyword id="KW-0472">Membrane</keyword>
<keyword id="KW-0496">Mitochondrion</keyword>
<keyword id="KW-0999">Mitochondrion inner membrane</keyword>
<keyword id="KW-1267">Proteomics identification</keyword>
<keyword id="KW-1185">Reference proteome</keyword>
<keyword id="KW-0812">Transmembrane</keyword>
<keyword id="KW-1133">Transmembrane helix</keyword>
<accession>Q9NWH2</accession>
<accession>B9EJD0</accession>
<accession>Q9NZ88</accession>
<accession>Q9P094</accession>
<comment type="function">
    <text evidence="2">Scaffold protein that participates in the c-ring assembly of mitochondrial ATP synthase (F(1)F(0) ATP synthase or complex V) by facilitating the membrane insertion and oligomer formation of the subunit c/ATP5MC3 (PubMed:33753518). Participates in the incorporation of the c-ring into vestigial complexes (PubMed:33753518). Additionally influences the incorporation of subunits MT-ATP6, MT-ATP8, ATP5MJ, and ATP5MK in the ATP synthase (PubMed:33753518).</text>
</comment>
<comment type="subunit">
    <text evidence="2">Interacts with the core subunits NDUFAF1, ECSIT and ACAD9 of the MCIA complex (PubMed:33753518). Interacts with ATP5MC3, NDUFC2, TMEM70, MT-ND2 and MT-ND3 (PubMed:33753518).</text>
</comment>
<comment type="interaction">
    <interactant intactId="EBI-10315004">
        <id>Q9NWH2</id>
    </interactant>
    <interactant intactId="EBI-13059134">
        <id>Q13520</id>
        <label>AQP6</label>
    </interactant>
    <organismsDiffer>false</organismsDiffer>
    <experiments>3</experiments>
</comment>
<comment type="interaction">
    <interactant intactId="EBI-10315004">
        <id>Q9NWH2</id>
    </interactant>
    <interactant intactId="EBI-3904417">
        <id>Q99437</id>
        <label>ATP6V0B</label>
    </interactant>
    <organismsDiffer>false</organismsDiffer>
    <experiments>3</experiments>
</comment>
<comment type="interaction">
    <interactant intactId="EBI-10315004">
        <id>Q9NWH2</id>
    </interactant>
    <interactant intactId="EBI-747430">
        <id>Q9BXK5</id>
        <label>BCL2L13</label>
    </interactant>
    <organismsDiffer>false</organismsDiffer>
    <experiments>3</experiments>
</comment>
<comment type="interaction">
    <interactant intactId="EBI-10315004">
        <id>Q9NWH2</id>
    </interactant>
    <interactant intactId="EBI-2835940">
        <id>P34972</id>
        <label>CNR2</label>
    </interactant>
    <organismsDiffer>false</organismsDiffer>
    <experiments>3</experiments>
</comment>
<comment type="interaction">
    <interactant intactId="EBI-10315004">
        <id>Q9NWH2</id>
    </interactant>
    <interactant intactId="EBI-8646596">
        <id>P49447</id>
        <label>CYB561</label>
    </interactant>
    <organismsDiffer>false</organismsDiffer>
    <experiments>3</experiments>
</comment>
<comment type="interaction">
    <interactant intactId="EBI-10315004">
        <id>Q9NWH2</id>
    </interactant>
    <interactant intactId="EBI-3915253">
        <id>Q15125</id>
        <label>EBP</label>
    </interactant>
    <organismsDiffer>false</organismsDiffer>
    <experiments>3</experiments>
</comment>
<comment type="interaction">
    <interactant intactId="EBI-10315004">
        <id>Q9NWH2</id>
    </interactant>
    <interactant intactId="EBI-18535450">
        <id>Q9GZR5</id>
        <label>ELOVL4</label>
    </interactant>
    <organismsDiffer>false</organismsDiffer>
    <experiments>3</experiments>
</comment>
<comment type="interaction">
    <interactant intactId="EBI-10315004">
        <id>Q9NWH2</id>
    </interactant>
    <interactant intactId="EBI-1058791">
        <id>Q9UJ14</id>
        <label>GGT7</label>
    </interactant>
    <organismsDiffer>false</organismsDiffer>
    <experiments>6</experiments>
</comment>
<comment type="interaction">
    <interactant intactId="EBI-10315004">
        <id>Q9NWH2</id>
    </interactant>
    <interactant intactId="EBI-2868909">
        <id>Q9H3K2</id>
        <label>GHITM</label>
    </interactant>
    <organismsDiffer>false</organismsDiffer>
    <experiments>3</experiments>
</comment>
<comment type="interaction">
    <interactant intactId="EBI-10315004">
        <id>Q9NWH2</id>
    </interactant>
    <interactant intactId="EBI-17458373">
        <id>P48165</id>
        <label>GJA8</label>
    </interactant>
    <organismsDiffer>false</organismsDiffer>
    <experiments>3</experiments>
</comment>
<comment type="interaction">
    <interactant intactId="EBI-10315004">
        <id>Q9NWH2</id>
    </interactant>
    <interactant intactId="EBI-17231387">
        <id>Q6ZVE7</id>
        <label>GOLT1A</label>
    </interactant>
    <organismsDiffer>false</organismsDiffer>
    <experiments>3</experiments>
</comment>
<comment type="interaction">
    <interactant intactId="EBI-10315004">
        <id>Q9NWH2</id>
    </interactant>
    <interactant intactId="EBI-18076404">
        <id>O15529</id>
        <label>GPR42</label>
    </interactant>
    <organismsDiffer>false</organismsDiffer>
    <experiments>3</experiments>
</comment>
<comment type="interaction">
    <interactant intactId="EBI-10315004">
        <id>Q9NWH2</id>
    </interactant>
    <interactant intactId="EBI-2832909">
        <id>Q7Z429</id>
        <label>GRINA</label>
    </interactant>
    <organismsDiffer>false</organismsDiffer>
    <experiments>3</experiments>
</comment>
<comment type="interaction">
    <interactant intactId="EBI-10315004">
        <id>Q9NWH2</id>
    </interactant>
    <interactant intactId="EBI-1052304">
        <id>Q8NBQ5</id>
        <label>HSD17B11</label>
    </interactant>
    <organismsDiffer>false</organismsDiffer>
    <experiments>3</experiments>
</comment>
<comment type="interaction">
    <interactant intactId="EBI-10315004">
        <id>Q9NWH2</id>
    </interactant>
    <interactant intactId="EBI-1031656">
        <id>Q13651</id>
        <label>IL10RA</label>
    </interactant>
    <organismsDiffer>false</organismsDiffer>
    <experiments>3</experiments>
</comment>
<comment type="interaction">
    <interactant intactId="EBI-10315004">
        <id>Q9NWH2</id>
    </interactant>
    <interactant intactId="EBI-10266796">
        <id>Q8N5M9</id>
        <label>JAGN1</label>
    </interactant>
    <organismsDiffer>false</organismsDiffer>
    <experiments>3</experiments>
</comment>
<comment type="interaction">
    <interactant intactId="EBI-10315004">
        <id>Q9NWH2</id>
    </interactant>
    <interactant intactId="EBI-9641334">
        <id>Q8NA29-2</id>
        <label>MFSD2A</label>
    </interactant>
    <organismsDiffer>false</organismsDiffer>
    <experiments>3</experiments>
</comment>
<comment type="interaction">
    <interactant intactId="EBI-10315004">
        <id>Q9NWH2</id>
    </interactant>
    <interactant intactId="EBI-2858252">
        <id>Q6ZSS7</id>
        <label>MFSD6</label>
    </interactant>
    <organismsDiffer>false</organismsDiffer>
    <experiments>3</experiments>
</comment>
<comment type="interaction">
    <interactant intactId="EBI-10315004">
        <id>Q9NWH2</id>
    </interactant>
    <interactant intactId="EBI-949102">
        <id>Q15800</id>
        <label>MSMO1</label>
    </interactant>
    <organismsDiffer>false</organismsDiffer>
    <experiments>3</experiments>
</comment>
<comment type="interaction">
    <interactant intactId="EBI-10315004">
        <id>Q9NWH2</id>
    </interactant>
    <interactant intactId="EBI-3923617">
        <id>Q9H2K0</id>
        <label>MTIF3</label>
    </interactant>
    <organismsDiffer>false</organismsDiffer>
    <experiments>3</experiments>
</comment>
<comment type="interaction">
    <interactant intactId="EBI-10315004">
        <id>Q9NWH2</id>
    </interactant>
    <interactant intactId="EBI-1246131">
        <id>O95167</id>
        <label>NDUFA3</label>
    </interactant>
    <organismsDiffer>false</organismsDiffer>
    <experiments>3</experiments>
</comment>
<comment type="interaction">
    <interactant intactId="EBI-10315004">
        <id>Q9NWH2</id>
    </interactant>
    <interactant intactId="EBI-12188331">
        <id>P60201-2</id>
        <label>PLP1</label>
    </interactant>
    <organismsDiffer>false</organismsDiffer>
    <experiments>3</experiments>
</comment>
<comment type="interaction">
    <interactant intactId="EBI-10315004">
        <id>Q9NWH2</id>
    </interactant>
    <interactant intactId="EBI-348482">
        <id>Q99942</id>
        <label>RNF5</label>
    </interactant>
    <organismsDiffer>false</organismsDiffer>
    <experiments>3</experiments>
</comment>
<comment type="interaction">
    <interactant intactId="EBI-10315004">
        <id>Q9NWH2</id>
    </interactant>
    <interactant intactId="EBI-1046170">
        <id>O95470</id>
        <label>SGPL1</label>
    </interactant>
    <organismsDiffer>false</organismsDiffer>
    <experiments>3</experiments>
</comment>
<comment type="interaction">
    <interactant intactId="EBI-10315004">
        <id>Q9NWH2</id>
    </interactant>
    <interactant intactId="EBI-3923031">
        <id>Q14973</id>
        <label>SLC10A1</label>
    </interactant>
    <organismsDiffer>false</organismsDiffer>
    <experiments>3</experiments>
</comment>
<comment type="interaction">
    <interactant intactId="EBI-10315004">
        <id>Q9NWH2</id>
    </interactant>
    <interactant intactId="EBI-18159983">
        <id>Q3KNW5</id>
        <label>SLC10A6</label>
    </interactant>
    <organismsDiffer>false</organismsDiffer>
    <experiments>3</experiments>
</comment>
<comment type="interaction">
    <interactant intactId="EBI-10315004">
        <id>Q9NWH2</id>
    </interactant>
    <interactant intactId="EBI-3923779">
        <id>Q9BZV2</id>
        <label>SLC19A3</label>
    </interactant>
    <organismsDiffer>false</organismsDiffer>
    <experiments>3</experiments>
</comment>
<comment type="interaction">
    <interactant intactId="EBI-10315004">
        <id>Q9NWH2</id>
    </interactant>
    <interactant intactId="EBI-10294651">
        <id>Q99726</id>
        <label>SLC30A3</label>
    </interactant>
    <organismsDiffer>false</organismsDiffer>
    <experiments>3</experiments>
</comment>
<comment type="interaction">
    <interactant intactId="EBI-10315004">
        <id>Q9NWH2</id>
    </interactant>
    <interactant intactId="EBI-1049004">
        <id>P57105</id>
        <label>SYNJ2BP</label>
    </interactant>
    <organismsDiffer>false</organismsDiffer>
    <experiments>3</experiments>
</comment>
<comment type="interaction">
    <interactant intactId="EBI-10315004">
        <id>Q9NWH2</id>
    </interactant>
    <interactant intactId="EBI-2820569">
        <id>Q969X1</id>
        <label>TMBIM1</label>
    </interactant>
    <organismsDiffer>false</organismsDiffer>
    <experiments>3</experiments>
</comment>
<comment type="interaction">
    <interactant intactId="EBI-10315004">
        <id>Q9NWH2</id>
    </interactant>
    <interactant intactId="EBI-11724423">
        <id>Q7Z7N9</id>
        <label>TMEM179B</label>
    </interactant>
    <organismsDiffer>false</organismsDiffer>
    <experiments>3</experiments>
</comment>
<comment type="interaction">
    <interactant intactId="EBI-10315004">
        <id>Q9NWH2</id>
    </interactant>
    <interactant intactId="EBI-726044">
        <id>Q9NW97</id>
        <label>TMEM51</label>
    </interactant>
    <organismsDiffer>false</organismsDiffer>
    <experiments>3</experiments>
</comment>
<comment type="interaction">
    <interactant intactId="EBI-10315004">
        <id>Q9NWH2</id>
    </interactant>
    <interactant intactId="EBI-2857623">
        <id>Q96FB2</id>
    </interactant>
    <organismsDiffer>false</organismsDiffer>
    <experiments>3</experiments>
</comment>
<comment type="subcellular location">
    <subcellularLocation>
        <location evidence="2">Mitochondrion inner membrane</location>
        <topology evidence="2">Multi-pass membrane protein</topology>
    </subcellularLocation>
</comment>
<comment type="similarity">
    <text evidence="3">Belongs to the TMEM242 family.</text>
</comment>
<comment type="sequence caution" evidence="3">
    <conflict type="erroneous initiation">
        <sequence resource="EMBL-CDS" id="AAF28965"/>
    </conflict>
    <text>Extended N-terminus.</text>
</comment>
<comment type="sequence caution" evidence="3">
    <conflict type="frameshift">
        <sequence resource="EMBL-CDS" id="AAF67621"/>
    </conflict>
</comment>
<sequence length="141" mass="14758">METAGAATGQPASGLEAPGSTNDRLFLVKGGIFLGTVAAAGMLAGFITTLSLAKKKSPEWFNKGSMATAALPESGSSLALRALGWGSLYAWCGVGVISFAVWKALGVHSMNDFRSKMQSIFPTIPKNSESAVEWEETLKSK</sequence>
<reference key="1">
    <citation type="submission" date="1999-05" db="EMBL/GenBank/DDBJ databases">
        <title>Human partial CDS from CD34+ stem cells.</title>
        <authorList>
            <person name="Ye M."/>
            <person name="Zhang Q.-H."/>
            <person name="Zhou J."/>
            <person name="Shen Y."/>
            <person name="Wu X.-Y."/>
            <person name="Guan Z.Q."/>
            <person name="Wang L."/>
            <person name="Fan H.-Y."/>
            <person name="Mao Y.-F."/>
            <person name="Dai M."/>
            <person name="Huang Q.-H."/>
            <person name="Chen S.-J."/>
            <person name="Chen Z."/>
        </authorList>
    </citation>
    <scope>NUCLEOTIDE SEQUENCE [LARGE SCALE MRNA]</scope>
    <source>
        <tissue>Blood</tissue>
    </source>
</reference>
<reference key="2">
    <citation type="submission" date="1999-12" db="EMBL/GenBank/DDBJ databases">
        <title>A novel gene expressed in human bone marrow.</title>
        <authorList>
            <person name="Zhao M."/>
            <person name="Gu J."/>
            <person name="Li N."/>
            <person name="Peng Y."/>
            <person name="Han Z."/>
            <person name="Chen Z."/>
        </authorList>
    </citation>
    <scope>NUCLEOTIDE SEQUENCE [LARGE SCALE MRNA]</scope>
    <source>
        <tissue>Bone marrow</tissue>
    </source>
</reference>
<reference key="3">
    <citation type="journal article" date="2004" name="Nat. Genet.">
        <title>Complete sequencing and characterization of 21,243 full-length human cDNAs.</title>
        <authorList>
            <person name="Ota T."/>
            <person name="Suzuki Y."/>
            <person name="Nishikawa T."/>
            <person name="Otsuki T."/>
            <person name="Sugiyama T."/>
            <person name="Irie R."/>
            <person name="Wakamatsu A."/>
            <person name="Hayashi K."/>
            <person name="Sato H."/>
            <person name="Nagai K."/>
            <person name="Kimura K."/>
            <person name="Makita H."/>
            <person name="Sekine M."/>
            <person name="Obayashi M."/>
            <person name="Nishi T."/>
            <person name="Shibahara T."/>
            <person name="Tanaka T."/>
            <person name="Ishii S."/>
            <person name="Yamamoto J."/>
            <person name="Saito K."/>
            <person name="Kawai Y."/>
            <person name="Isono Y."/>
            <person name="Nakamura Y."/>
            <person name="Nagahari K."/>
            <person name="Murakami K."/>
            <person name="Yasuda T."/>
            <person name="Iwayanagi T."/>
            <person name="Wagatsuma M."/>
            <person name="Shiratori A."/>
            <person name="Sudo H."/>
            <person name="Hosoiri T."/>
            <person name="Kaku Y."/>
            <person name="Kodaira H."/>
            <person name="Kondo H."/>
            <person name="Sugawara M."/>
            <person name="Takahashi M."/>
            <person name="Kanda K."/>
            <person name="Yokoi T."/>
            <person name="Furuya T."/>
            <person name="Kikkawa E."/>
            <person name="Omura Y."/>
            <person name="Abe K."/>
            <person name="Kamihara K."/>
            <person name="Katsuta N."/>
            <person name="Sato K."/>
            <person name="Tanikawa M."/>
            <person name="Yamazaki M."/>
            <person name="Ninomiya K."/>
            <person name="Ishibashi T."/>
            <person name="Yamashita H."/>
            <person name="Murakawa K."/>
            <person name="Fujimori K."/>
            <person name="Tanai H."/>
            <person name="Kimata M."/>
            <person name="Watanabe M."/>
            <person name="Hiraoka S."/>
            <person name="Chiba Y."/>
            <person name="Ishida S."/>
            <person name="Ono Y."/>
            <person name="Takiguchi S."/>
            <person name="Watanabe S."/>
            <person name="Yosida M."/>
            <person name="Hotuta T."/>
            <person name="Kusano J."/>
            <person name="Kanehori K."/>
            <person name="Takahashi-Fujii A."/>
            <person name="Hara H."/>
            <person name="Tanase T.-O."/>
            <person name="Nomura Y."/>
            <person name="Togiya S."/>
            <person name="Komai F."/>
            <person name="Hara R."/>
            <person name="Takeuchi K."/>
            <person name="Arita M."/>
            <person name="Imose N."/>
            <person name="Musashino K."/>
            <person name="Yuuki H."/>
            <person name="Oshima A."/>
            <person name="Sasaki N."/>
            <person name="Aotsuka S."/>
            <person name="Yoshikawa Y."/>
            <person name="Matsunawa H."/>
            <person name="Ichihara T."/>
            <person name="Shiohata N."/>
            <person name="Sano S."/>
            <person name="Moriya S."/>
            <person name="Momiyama H."/>
            <person name="Satoh N."/>
            <person name="Takami S."/>
            <person name="Terashima Y."/>
            <person name="Suzuki O."/>
            <person name="Nakagawa S."/>
            <person name="Senoh A."/>
            <person name="Mizoguchi H."/>
            <person name="Goto Y."/>
            <person name="Shimizu F."/>
            <person name="Wakebe H."/>
            <person name="Hishigaki H."/>
            <person name="Watanabe T."/>
            <person name="Sugiyama A."/>
            <person name="Takemoto M."/>
            <person name="Kawakami B."/>
            <person name="Yamazaki M."/>
            <person name="Watanabe K."/>
            <person name="Kumagai A."/>
            <person name="Itakura S."/>
            <person name="Fukuzumi Y."/>
            <person name="Fujimori Y."/>
            <person name="Komiyama M."/>
            <person name="Tashiro H."/>
            <person name="Tanigami A."/>
            <person name="Fujiwara T."/>
            <person name="Ono T."/>
            <person name="Yamada K."/>
            <person name="Fujii Y."/>
            <person name="Ozaki K."/>
            <person name="Hirao M."/>
            <person name="Ohmori Y."/>
            <person name="Kawabata A."/>
            <person name="Hikiji T."/>
            <person name="Kobatake N."/>
            <person name="Inagaki H."/>
            <person name="Ikema Y."/>
            <person name="Okamoto S."/>
            <person name="Okitani R."/>
            <person name="Kawakami T."/>
            <person name="Noguchi S."/>
            <person name="Itoh T."/>
            <person name="Shigeta K."/>
            <person name="Senba T."/>
            <person name="Matsumura K."/>
            <person name="Nakajima Y."/>
            <person name="Mizuno T."/>
            <person name="Morinaga M."/>
            <person name="Sasaki M."/>
            <person name="Togashi T."/>
            <person name="Oyama M."/>
            <person name="Hata H."/>
            <person name="Watanabe M."/>
            <person name="Komatsu T."/>
            <person name="Mizushima-Sugano J."/>
            <person name="Satoh T."/>
            <person name="Shirai Y."/>
            <person name="Takahashi Y."/>
            <person name="Nakagawa K."/>
            <person name="Okumura K."/>
            <person name="Nagase T."/>
            <person name="Nomura N."/>
            <person name="Kikuchi H."/>
            <person name="Masuho Y."/>
            <person name="Yamashita R."/>
            <person name="Nakai K."/>
            <person name="Yada T."/>
            <person name="Nakamura Y."/>
            <person name="Ohara O."/>
            <person name="Isogai T."/>
            <person name="Sugano S."/>
        </authorList>
    </citation>
    <scope>NUCLEOTIDE SEQUENCE [LARGE SCALE MRNA]</scope>
    <source>
        <tissue>Embryo</tissue>
    </source>
</reference>
<reference key="4">
    <citation type="journal article" date="2003" name="Nature">
        <title>The DNA sequence and analysis of human chromosome 6.</title>
        <authorList>
            <person name="Mungall A.J."/>
            <person name="Palmer S.A."/>
            <person name="Sims S.K."/>
            <person name="Edwards C.A."/>
            <person name="Ashurst J.L."/>
            <person name="Wilming L."/>
            <person name="Jones M.C."/>
            <person name="Horton R."/>
            <person name="Hunt S.E."/>
            <person name="Scott C.E."/>
            <person name="Gilbert J.G.R."/>
            <person name="Clamp M.E."/>
            <person name="Bethel G."/>
            <person name="Milne S."/>
            <person name="Ainscough R."/>
            <person name="Almeida J.P."/>
            <person name="Ambrose K.D."/>
            <person name="Andrews T.D."/>
            <person name="Ashwell R.I.S."/>
            <person name="Babbage A.K."/>
            <person name="Bagguley C.L."/>
            <person name="Bailey J."/>
            <person name="Banerjee R."/>
            <person name="Barker D.J."/>
            <person name="Barlow K.F."/>
            <person name="Bates K."/>
            <person name="Beare D.M."/>
            <person name="Beasley H."/>
            <person name="Beasley O."/>
            <person name="Bird C.P."/>
            <person name="Blakey S.E."/>
            <person name="Bray-Allen S."/>
            <person name="Brook J."/>
            <person name="Brown A.J."/>
            <person name="Brown J.Y."/>
            <person name="Burford D.C."/>
            <person name="Burrill W."/>
            <person name="Burton J."/>
            <person name="Carder C."/>
            <person name="Carter N.P."/>
            <person name="Chapman J.C."/>
            <person name="Clark S.Y."/>
            <person name="Clark G."/>
            <person name="Clee C.M."/>
            <person name="Clegg S."/>
            <person name="Cobley V."/>
            <person name="Collier R.E."/>
            <person name="Collins J.E."/>
            <person name="Colman L.K."/>
            <person name="Corby N.R."/>
            <person name="Coville G.J."/>
            <person name="Culley K.M."/>
            <person name="Dhami P."/>
            <person name="Davies J."/>
            <person name="Dunn M."/>
            <person name="Earthrowl M.E."/>
            <person name="Ellington A.E."/>
            <person name="Evans K.A."/>
            <person name="Faulkner L."/>
            <person name="Francis M.D."/>
            <person name="Frankish A."/>
            <person name="Frankland J."/>
            <person name="French L."/>
            <person name="Garner P."/>
            <person name="Garnett J."/>
            <person name="Ghori M.J."/>
            <person name="Gilby L.M."/>
            <person name="Gillson C.J."/>
            <person name="Glithero R.J."/>
            <person name="Grafham D.V."/>
            <person name="Grant M."/>
            <person name="Gribble S."/>
            <person name="Griffiths C."/>
            <person name="Griffiths M.N.D."/>
            <person name="Hall R."/>
            <person name="Halls K.S."/>
            <person name="Hammond S."/>
            <person name="Harley J.L."/>
            <person name="Hart E.A."/>
            <person name="Heath P.D."/>
            <person name="Heathcott R."/>
            <person name="Holmes S.J."/>
            <person name="Howden P.J."/>
            <person name="Howe K.L."/>
            <person name="Howell G.R."/>
            <person name="Huckle E."/>
            <person name="Humphray S.J."/>
            <person name="Humphries M.D."/>
            <person name="Hunt A.R."/>
            <person name="Johnson C.M."/>
            <person name="Joy A.A."/>
            <person name="Kay M."/>
            <person name="Keenan S.J."/>
            <person name="Kimberley A.M."/>
            <person name="King A."/>
            <person name="Laird G.K."/>
            <person name="Langford C."/>
            <person name="Lawlor S."/>
            <person name="Leongamornlert D.A."/>
            <person name="Leversha M."/>
            <person name="Lloyd C.R."/>
            <person name="Lloyd D.M."/>
            <person name="Loveland J.E."/>
            <person name="Lovell J."/>
            <person name="Martin S."/>
            <person name="Mashreghi-Mohammadi M."/>
            <person name="Maslen G.L."/>
            <person name="Matthews L."/>
            <person name="McCann O.T."/>
            <person name="McLaren S.J."/>
            <person name="McLay K."/>
            <person name="McMurray A."/>
            <person name="Moore M.J.F."/>
            <person name="Mullikin J.C."/>
            <person name="Niblett D."/>
            <person name="Nickerson T."/>
            <person name="Novik K.L."/>
            <person name="Oliver K."/>
            <person name="Overton-Larty E.K."/>
            <person name="Parker A."/>
            <person name="Patel R."/>
            <person name="Pearce A.V."/>
            <person name="Peck A.I."/>
            <person name="Phillimore B.J.C.T."/>
            <person name="Phillips S."/>
            <person name="Plumb R.W."/>
            <person name="Porter K.M."/>
            <person name="Ramsey Y."/>
            <person name="Ranby S.A."/>
            <person name="Rice C.M."/>
            <person name="Ross M.T."/>
            <person name="Searle S.M."/>
            <person name="Sehra H.K."/>
            <person name="Sheridan E."/>
            <person name="Skuce C.D."/>
            <person name="Smith S."/>
            <person name="Smith M."/>
            <person name="Spraggon L."/>
            <person name="Squares S.L."/>
            <person name="Steward C.A."/>
            <person name="Sycamore N."/>
            <person name="Tamlyn-Hall G."/>
            <person name="Tester J."/>
            <person name="Theaker A.J."/>
            <person name="Thomas D.W."/>
            <person name="Thorpe A."/>
            <person name="Tracey A."/>
            <person name="Tromans A."/>
            <person name="Tubby B."/>
            <person name="Wall M."/>
            <person name="Wallis J.M."/>
            <person name="West A.P."/>
            <person name="White S.S."/>
            <person name="Whitehead S.L."/>
            <person name="Whittaker H."/>
            <person name="Wild A."/>
            <person name="Willey D.J."/>
            <person name="Wilmer T.E."/>
            <person name="Wood J.M."/>
            <person name="Wray P.W."/>
            <person name="Wyatt J.C."/>
            <person name="Young L."/>
            <person name="Younger R.M."/>
            <person name="Bentley D.R."/>
            <person name="Coulson A."/>
            <person name="Durbin R.M."/>
            <person name="Hubbard T."/>
            <person name="Sulston J.E."/>
            <person name="Dunham I."/>
            <person name="Rogers J."/>
            <person name="Beck S."/>
        </authorList>
    </citation>
    <scope>NUCLEOTIDE SEQUENCE [LARGE SCALE GENOMIC DNA]</scope>
</reference>
<reference key="5">
    <citation type="submission" date="2005-09" db="EMBL/GenBank/DDBJ databases">
        <authorList>
            <person name="Mural R.J."/>
            <person name="Istrail S."/>
            <person name="Sutton G.G."/>
            <person name="Florea L."/>
            <person name="Halpern A.L."/>
            <person name="Mobarry C.M."/>
            <person name="Lippert R."/>
            <person name="Walenz B."/>
            <person name="Shatkay H."/>
            <person name="Dew I."/>
            <person name="Miller J.R."/>
            <person name="Flanigan M.J."/>
            <person name="Edwards N.J."/>
            <person name="Bolanos R."/>
            <person name="Fasulo D."/>
            <person name="Halldorsson B.V."/>
            <person name="Hannenhalli S."/>
            <person name="Turner R."/>
            <person name="Yooseph S."/>
            <person name="Lu F."/>
            <person name="Nusskern D.R."/>
            <person name="Shue B.C."/>
            <person name="Zheng X.H."/>
            <person name="Zhong F."/>
            <person name="Delcher A.L."/>
            <person name="Huson D.H."/>
            <person name="Kravitz S.A."/>
            <person name="Mouchard L."/>
            <person name="Reinert K."/>
            <person name="Remington K.A."/>
            <person name="Clark A.G."/>
            <person name="Waterman M.S."/>
            <person name="Eichler E.E."/>
            <person name="Adams M.D."/>
            <person name="Hunkapiller M.W."/>
            <person name="Myers E.W."/>
            <person name="Venter J.C."/>
        </authorList>
    </citation>
    <scope>NUCLEOTIDE SEQUENCE [LARGE SCALE GENOMIC DNA]</scope>
</reference>
<reference key="6">
    <citation type="journal article" date="2004" name="Genome Res.">
        <title>The status, quality, and expansion of the NIH full-length cDNA project: the Mammalian Gene Collection (MGC).</title>
        <authorList>
            <consortium name="The MGC Project Team"/>
        </authorList>
    </citation>
    <scope>NUCLEOTIDE SEQUENCE [LARGE SCALE MRNA]</scope>
    <source>
        <tissue>Brain</tissue>
    </source>
</reference>
<reference key="7">
    <citation type="journal article" date="2012" name="Proc. Natl. Acad. Sci. U.S.A.">
        <title>N-terminal acetylome analyses and functional insights of the N-terminal acetyltransferase NatB.</title>
        <authorList>
            <person name="Van Damme P."/>
            <person name="Lasa M."/>
            <person name="Polevoda B."/>
            <person name="Gazquez C."/>
            <person name="Elosegui-Artola A."/>
            <person name="Kim D.S."/>
            <person name="De Juan-Pardo E."/>
            <person name="Demeyer K."/>
            <person name="Hole K."/>
            <person name="Larrea E."/>
            <person name="Timmerman E."/>
            <person name="Prieto J."/>
            <person name="Arnesen T."/>
            <person name="Sherman F."/>
            <person name="Gevaert K."/>
            <person name="Aldabe R."/>
        </authorList>
    </citation>
    <scope>ACETYLATION [LARGE SCALE ANALYSIS] AT MET-1</scope>
    <scope>IDENTIFICATION BY MASS SPECTROMETRY [LARGE SCALE ANALYSIS]</scope>
</reference>
<reference key="8">
    <citation type="journal article" date="2021" name="Proc. Natl. Acad. Sci. U.S.A.">
        <title>TMEM70 and TMEM242 help to assemble the rotor ring of human ATP synthase and interact with assembly factors for complex I.</title>
        <authorList>
            <person name="Carroll J."/>
            <person name="He J."/>
            <person name="Ding S."/>
            <person name="Fearnley I.M."/>
            <person name="Walker J.E."/>
        </authorList>
    </citation>
    <scope>SUBCELLULAR LOCATION</scope>
    <scope>TOPOLOGY</scope>
    <scope>INTERACTION WITH ATP5MC3; TMEM70; ACAD9; ECSIT; NDUFAF1; NDUFC2; MT-ND2 AND MT-ND3</scope>
    <scope>FUNCTION</scope>
</reference>
<proteinExistence type="evidence at protein level"/>
<dbReference type="EMBL" id="AF161405">
    <property type="protein sequence ID" value="AAF28965.1"/>
    <property type="status" value="ALT_INIT"/>
    <property type="molecule type" value="mRNA"/>
</dbReference>
<dbReference type="EMBL" id="AF217510">
    <property type="protein sequence ID" value="AAF67621.1"/>
    <property type="status" value="ALT_FRAME"/>
    <property type="molecule type" value="mRNA"/>
</dbReference>
<dbReference type="EMBL" id="AK000891">
    <property type="protein sequence ID" value="BAA91409.1"/>
    <property type="molecule type" value="mRNA"/>
</dbReference>
<dbReference type="EMBL" id="AL607068">
    <property type="status" value="NOT_ANNOTATED_CDS"/>
    <property type="molecule type" value="Genomic_DNA"/>
</dbReference>
<dbReference type="EMBL" id="AL390955">
    <property type="status" value="NOT_ANNOTATED_CDS"/>
    <property type="molecule type" value="Genomic_DNA"/>
</dbReference>
<dbReference type="EMBL" id="CH471051">
    <property type="protein sequence ID" value="EAW47677.1"/>
    <property type="molecule type" value="Genomic_DNA"/>
</dbReference>
<dbReference type="EMBL" id="BC029130">
    <property type="protein sequence ID" value="AAH29130.1"/>
    <property type="molecule type" value="mRNA"/>
</dbReference>
<dbReference type="EMBL" id="BC146893">
    <property type="protein sequence ID" value="AAI46894.1"/>
    <property type="molecule type" value="mRNA"/>
</dbReference>
<dbReference type="EMBL" id="BC146895">
    <property type="protein sequence ID" value="AAI46896.1"/>
    <property type="molecule type" value="mRNA"/>
</dbReference>
<dbReference type="CCDS" id="CCDS43519.1"/>
<dbReference type="RefSeq" id="NP_060922.2">
    <property type="nucleotide sequence ID" value="NM_018452.5"/>
</dbReference>
<dbReference type="BioGRID" id="609914">
    <property type="interactions" value="55"/>
</dbReference>
<dbReference type="FunCoup" id="Q9NWH2">
    <property type="interactions" value="640"/>
</dbReference>
<dbReference type="IntAct" id="Q9NWH2">
    <property type="interactions" value="43"/>
</dbReference>
<dbReference type="MINT" id="Q9NWH2"/>
<dbReference type="STRING" id="9606.ENSP00000383594"/>
<dbReference type="TCDB" id="8.A.181.1.1">
    <property type="family name" value="the tmem242 protein complex assembly factor (tmem242) family"/>
</dbReference>
<dbReference type="iPTMnet" id="Q9NWH2"/>
<dbReference type="PhosphoSitePlus" id="Q9NWH2"/>
<dbReference type="BioMuta" id="TMEM242"/>
<dbReference type="DMDM" id="74753021"/>
<dbReference type="jPOST" id="Q9NWH2"/>
<dbReference type="MassIVE" id="Q9NWH2"/>
<dbReference type="PaxDb" id="9606-ENSP00000383594"/>
<dbReference type="PeptideAtlas" id="Q9NWH2"/>
<dbReference type="ProteomicsDB" id="82937"/>
<dbReference type="Pumba" id="Q9NWH2"/>
<dbReference type="TopDownProteomics" id="Q9NWH2"/>
<dbReference type="Antibodypedia" id="49845">
    <property type="antibodies" value="39 antibodies from 8 providers"/>
</dbReference>
<dbReference type="DNASU" id="729515"/>
<dbReference type="Ensembl" id="ENST00000400788.9">
    <property type="protein sequence ID" value="ENSP00000383594.3"/>
    <property type="gene ID" value="ENSG00000215712.11"/>
</dbReference>
<dbReference type="GeneID" id="729515"/>
<dbReference type="KEGG" id="hsa:729515"/>
<dbReference type="MANE-Select" id="ENST00000400788.9">
    <property type="protein sequence ID" value="ENSP00000383594.3"/>
    <property type="RefSeq nucleotide sequence ID" value="NM_018452.6"/>
    <property type="RefSeq protein sequence ID" value="NP_060922.2"/>
</dbReference>
<dbReference type="UCSC" id="uc003sih.5">
    <property type="organism name" value="human"/>
</dbReference>
<dbReference type="AGR" id="HGNC:17206"/>
<dbReference type="CTD" id="729515"/>
<dbReference type="GeneCards" id="TMEM242"/>
<dbReference type="HGNC" id="HGNC:17206">
    <property type="gene designation" value="TMEM242"/>
</dbReference>
<dbReference type="HPA" id="ENSG00000215712">
    <property type="expression patterns" value="Low tissue specificity"/>
</dbReference>
<dbReference type="MIM" id="620721">
    <property type="type" value="gene"/>
</dbReference>
<dbReference type="neXtProt" id="NX_Q9NWH2"/>
<dbReference type="OpenTargets" id="ENSG00000215712"/>
<dbReference type="PharmGKB" id="PA25936"/>
<dbReference type="VEuPathDB" id="HostDB:ENSG00000215712"/>
<dbReference type="eggNOG" id="ENOG502S2GB">
    <property type="taxonomic scope" value="Eukaryota"/>
</dbReference>
<dbReference type="GeneTree" id="ENSGT00390000008642"/>
<dbReference type="HOGENOM" id="CLU_115460_0_0_1"/>
<dbReference type="InParanoid" id="Q9NWH2"/>
<dbReference type="OMA" id="RSPEWFN"/>
<dbReference type="OrthoDB" id="2378895at2759"/>
<dbReference type="PAN-GO" id="Q9NWH2">
    <property type="GO annotations" value="0 GO annotations based on evolutionary models"/>
</dbReference>
<dbReference type="PhylomeDB" id="Q9NWH2"/>
<dbReference type="TreeFam" id="TF323317"/>
<dbReference type="PathwayCommons" id="Q9NWH2"/>
<dbReference type="SignaLink" id="Q9NWH2"/>
<dbReference type="BioGRID-ORCS" id="729515">
    <property type="hits" value="187 hits in 1154 CRISPR screens"/>
</dbReference>
<dbReference type="GeneWiki" id="C6orf35"/>
<dbReference type="GenomeRNAi" id="729515"/>
<dbReference type="Pharos" id="Q9NWH2">
    <property type="development level" value="Tdark"/>
</dbReference>
<dbReference type="PRO" id="PR:Q9NWH2"/>
<dbReference type="Proteomes" id="UP000005640">
    <property type="component" value="Chromosome 6"/>
</dbReference>
<dbReference type="RNAct" id="Q9NWH2">
    <property type="molecule type" value="protein"/>
</dbReference>
<dbReference type="Bgee" id="ENSG00000215712">
    <property type="expression patterns" value="Expressed in buccal mucosa cell and 188 other cell types or tissues"/>
</dbReference>
<dbReference type="ExpressionAtlas" id="Q9NWH2">
    <property type="expression patterns" value="baseline and differential"/>
</dbReference>
<dbReference type="GO" id="GO:0005743">
    <property type="term" value="C:mitochondrial inner membrane"/>
    <property type="evidence" value="ECO:0000314"/>
    <property type="project" value="UniProtKB"/>
</dbReference>
<dbReference type="GO" id="GO:0005739">
    <property type="term" value="C:mitochondrion"/>
    <property type="evidence" value="ECO:0006056"/>
    <property type="project" value="FlyBase"/>
</dbReference>
<dbReference type="GO" id="GO:0033615">
    <property type="term" value="P:mitochondrial proton-transporting ATP synthase complex assembly"/>
    <property type="evidence" value="ECO:0000315"/>
    <property type="project" value="UniProtKB"/>
</dbReference>
<dbReference type="InterPro" id="IPR009792">
    <property type="entry name" value="TMEM242"/>
</dbReference>
<dbReference type="PANTHER" id="PTHR13141">
    <property type="entry name" value="TRANSMEMBRANE PROTEIN 242"/>
    <property type="match status" value="1"/>
</dbReference>
<dbReference type="PANTHER" id="PTHR13141:SF4">
    <property type="entry name" value="TRANSMEMBRANE PROTEIN 242"/>
    <property type="match status" value="1"/>
</dbReference>
<dbReference type="Pfam" id="PF07096">
    <property type="entry name" value="DUF1358"/>
    <property type="match status" value="1"/>
</dbReference>
<evidence type="ECO:0000255" key="1"/>
<evidence type="ECO:0000269" key="2">
    <source>
    </source>
</evidence>
<evidence type="ECO:0000305" key="3"/>
<evidence type="ECO:0000305" key="4">
    <source>
    </source>
</evidence>
<evidence type="ECO:0000312" key="5">
    <source>
        <dbReference type="HGNC" id="HGNC:17206"/>
    </source>
</evidence>
<evidence type="ECO:0007744" key="6">
    <source>
    </source>
</evidence>
<gene>
    <name evidence="5" type="primary">TMEM242</name>
    <name type="synonym">C6orf35</name>
    <name type="ORF">BM-033</name>
    <name type="ORF">HSPC287</name>
</gene>
<feature type="chain" id="PRO_0000295848" description="Transmembrane protein 242">
    <location>
        <begin position="1"/>
        <end position="141"/>
    </location>
</feature>
<feature type="topological domain" description="Mitochondrial matrix" evidence="4">
    <location>
        <begin position="1"/>
        <end position="29"/>
    </location>
</feature>
<feature type="transmembrane region" description="Helical" evidence="1">
    <location>
        <begin position="30"/>
        <end position="50"/>
    </location>
</feature>
<feature type="topological domain" description="Mitochondrial intermembrane" evidence="4">
    <location>
        <begin position="51"/>
        <end position="81"/>
    </location>
</feature>
<feature type="transmembrane region" description="Helical" evidence="1">
    <location>
        <begin position="82"/>
        <end position="102"/>
    </location>
</feature>
<feature type="topological domain" description="Mitochondrial matrix" evidence="4">
    <location>
        <begin position="103"/>
        <end position="141"/>
    </location>
</feature>
<feature type="modified residue" description="N-acetylmethionine" evidence="6">
    <location>
        <position position="1"/>
    </location>
</feature>